<dbReference type="PIR" id="B02258">
    <property type="entry name" value="HAGO3C"/>
</dbReference>
<dbReference type="InParanoid" id="P01935"/>
<dbReference type="Proteomes" id="UP000002277">
    <property type="component" value="Unplaced"/>
</dbReference>
<dbReference type="GO" id="GO:0031838">
    <property type="term" value="C:haptoglobin-hemoglobin complex"/>
    <property type="evidence" value="ECO:0000318"/>
    <property type="project" value="GO_Central"/>
</dbReference>
<dbReference type="GO" id="GO:0005833">
    <property type="term" value="C:hemoglobin complex"/>
    <property type="evidence" value="ECO:0000318"/>
    <property type="project" value="GO_Central"/>
</dbReference>
<dbReference type="GO" id="GO:0020037">
    <property type="term" value="F:heme binding"/>
    <property type="evidence" value="ECO:0000318"/>
    <property type="project" value="GO_Central"/>
</dbReference>
<dbReference type="GO" id="GO:0005506">
    <property type="term" value="F:iron ion binding"/>
    <property type="evidence" value="ECO:0007669"/>
    <property type="project" value="InterPro"/>
</dbReference>
<dbReference type="GO" id="GO:0019825">
    <property type="term" value="F:oxygen binding"/>
    <property type="evidence" value="ECO:0000318"/>
    <property type="project" value="GO_Central"/>
</dbReference>
<dbReference type="GO" id="GO:0005344">
    <property type="term" value="F:oxygen carrier activity"/>
    <property type="evidence" value="ECO:0000318"/>
    <property type="project" value="GO_Central"/>
</dbReference>
<dbReference type="GO" id="GO:0098869">
    <property type="term" value="P:cellular oxidant detoxification"/>
    <property type="evidence" value="ECO:0007669"/>
    <property type="project" value="GOC"/>
</dbReference>
<dbReference type="GO" id="GO:0042744">
    <property type="term" value="P:hydrogen peroxide catabolic process"/>
    <property type="evidence" value="ECO:0000318"/>
    <property type="project" value="GO_Central"/>
</dbReference>
<dbReference type="CDD" id="cd08927">
    <property type="entry name" value="Hb-alpha-like"/>
    <property type="match status" value="1"/>
</dbReference>
<dbReference type="FunFam" id="1.10.490.10:FF:000002">
    <property type="entry name" value="Hemoglobin subunit alpha"/>
    <property type="match status" value="1"/>
</dbReference>
<dbReference type="Gene3D" id="1.10.490.10">
    <property type="entry name" value="Globins"/>
    <property type="match status" value="1"/>
</dbReference>
<dbReference type="InterPro" id="IPR000971">
    <property type="entry name" value="Globin"/>
</dbReference>
<dbReference type="InterPro" id="IPR009050">
    <property type="entry name" value="Globin-like_sf"/>
</dbReference>
<dbReference type="InterPro" id="IPR012292">
    <property type="entry name" value="Globin/Proto"/>
</dbReference>
<dbReference type="InterPro" id="IPR002338">
    <property type="entry name" value="Hemoglobin_a-typ"/>
</dbReference>
<dbReference type="InterPro" id="IPR050056">
    <property type="entry name" value="Hemoglobin_oxygen_transport"/>
</dbReference>
<dbReference type="InterPro" id="IPR002339">
    <property type="entry name" value="Hemoglobin_pi"/>
</dbReference>
<dbReference type="PANTHER" id="PTHR11442">
    <property type="entry name" value="HEMOGLOBIN FAMILY MEMBER"/>
    <property type="match status" value="1"/>
</dbReference>
<dbReference type="PANTHER" id="PTHR11442:SF79">
    <property type="entry name" value="HEMOGLOBIN SUBUNIT ALPHA-3"/>
    <property type="match status" value="1"/>
</dbReference>
<dbReference type="Pfam" id="PF00042">
    <property type="entry name" value="Globin"/>
    <property type="match status" value="1"/>
</dbReference>
<dbReference type="PRINTS" id="PR00612">
    <property type="entry name" value="ALPHAHAEM"/>
</dbReference>
<dbReference type="PRINTS" id="PR00815">
    <property type="entry name" value="PIHAEM"/>
</dbReference>
<dbReference type="SUPFAM" id="SSF46458">
    <property type="entry name" value="Globin-like"/>
    <property type="match status" value="1"/>
</dbReference>
<dbReference type="PROSITE" id="PS01033">
    <property type="entry name" value="GLOBIN"/>
    <property type="match status" value="1"/>
</dbReference>
<reference key="1">
    <citation type="journal article" date="1973" name="J. Biol. Chem.">
        <title>Hemoglobin alpha-3 chains in apes. Primary structures and the presumptive nature of back mutation in a normally silent gene.</title>
        <authorList>
            <person name="Boyer S.H."/>
            <person name="Noyes A.N."/>
            <person name="Boyer M.L."/>
            <person name="Marr K."/>
        </authorList>
    </citation>
    <scope>PROTEIN SEQUENCE</scope>
</reference>
<keyword id="KW-0903">Direct protein sequencing</keyword>
<keyword id="KW-0349">Heme</keyword>
<keyword id="KW-0408">Iron</keyword>
<keyword id="KW-0479">Metal-binding</keyword>
<keyword id="KW-0561">Oxygen transport</keyword>
<keyword id="KW-1185">Reference proteome</keyword>
<keyword id="KW-0813">Transport</keyword>
<feature type="chain" id="PRO_0000052721" description="Hemoglobin subunit alpha-3">
    <location>
        <begin position="1"/>
        <end position="141"/>
    </location>
</feature>
<feature type="domain" description="Globin" evidence="1">
    <location>
        <begin position="1"/>
        <end position="141"/>
    </location>
</feature>
<feature type="binding site" evidence="1">
    <location>
        <position position="58"/>
    </location>
    <ligand>
        <name>O2</name>
        <dbReference type="ChEBI" id="CHEBI:15379"/>
    </ligand>
</feature>
<feature type="binding site" description="proximal binding residue" evidence="1">
    <location>
        <position position="87"/>
    </location>
    <ligand>
        <name>heme b</name>
        <dbReference type="ChEBI" id="CHEBI:60344"/>
    </ligand>
    <ligandPart>
        <name>Fe</name>
        <dbReference type="ChEBI" id="CHEBI:18248"/>
    </ligandPart>
</feature>
<proteinExistence type="evidence at protein level"/>
<comment type="function">
    <text>Involved in oxygen transport from the lung to the various peripheral tissues.</text>
</comment>
<comment type="subunit">
    <text>Heterotetramer of two alpha chains and two beta chains.</text>
</comment>
<comment type="tissue specificity">
    <text>Red blood cells.</text>
</comment>
<comment type="similarity">
    <text evidence="1">Belongs to the globin family.</text>
</comment>
<name>HBA3_PANTR</name>
<organism>
    <name type="scientific">Pan troglodytes</name>
    <name type="common">Chimpanzee</name>
    <dbReference type="NCBI Taxonomy" id="9598"/>
    <lineage>
        <taxon>Eukaryota</taxon>
        <taxon>Metazoa</taxon>
        <taxon>Chordata</taxon>
        <taxon>Craniata</taxon>
        <taxon>Vertebrata</taxon>
        <taxon>Euteleostomi</taxon>
        <taxon>Mammalia</taxon>
        <taxon>Eutheria</taxon>
        <taxon>Euarchontoglires</taxon>
        <taxon>Primates</taxon>
        <taxon>Haplorrhini</taxon>
        <taxon>Catarrhini</taxon>
        <taxon>Hominidae</taxon>
        <taxon>Pan</taxon>
    </lineage>
</organism>
<sequence length="141" mass="15238">VLSPADKTNVKAAWGKVGAHAGZYGAEALERMFLSFPTTKTYFPHFDLSHGSAZVKGHGKKVAKALSBAVZHLDDMPNALSALSBLHAHKLRVBPVBFKLLNHCLLVTLAABFPSZFTPAVHASVDKFLASVSTVLTSKYR</sequence>
<evidence type="ECO:0000255" key="1">
    <source>
        <dbReference type="PROSITE-ProRule" id="PRU00238"/>
    </source>
</evidence>
<accession>P01935</accession>
<protein>
    <recommendedName>
        <fullName>Hemoglobin subunit alpha-3</fullName>
    </recommendedName>
    <alternativeName>
        <fullName>Alpha-3-globin</fullName>
    </alternativeName>
    <alternativeName>
        <fullName>Hemoglobin alpha-2 chain</fullName>
    </alternativeName>
</protein>